<organism>
    <name type="scientific">Vibrio parahaemolyticus serotype O3:K6 (strain RIMD 2210633)</name>
    <dbReference type="NCBI Taxonomy" id="223926"/>
    <lineage>
        <taxon>Bacteria</taxon>
        <taxon>Pseudomonadati</taxon>
        <taxon>Pseudomonadota</taxon>
        <taxon>Gammaproteobacteria</taxon>
        <taxon>Vibrionales</taxon>
        <taxon>Vibrionaceae</taxon>
        <taxon>Vibrio</taxon>
    </lineage>
</organism>
<feature type="chain" id="PRO_0000068208" description="UPF0229 protein VP0986">
    <location>
        <begin position="1"/>
        <end position="423"/>
    </location>
</feature>
<feature type="region of interest" description="Disordered" evidence="2">
    <location>
        <begin position="69"/>
        <end position="112"/>
    </location>
</feature>
<feature type="compositionally biased region" description="Gly residues" evidence="2">
    <location>
        <begin position="93"/>
        <end position="102"/>
    </location>
</feature>
<comment type="similarity">
    <text evidence="1">Belongs to the UPF0229 family.</text>
</comment>
<accession>Q87R12</accession>
<gene>
    <name type="ordered locus">VP0986</name>
</gene>
<proteinExistence type="inferred from homology"/>
<sequence>MAQFIDRRLNGKNKSAVNRQRFLKRHKEQIKESVADAVNRRSITNTETGEDVSIPHKDINEPIFHQGKGGVRERVHPGNDQFITGDKIERPKGGGQGSGSGEGNASPDGEGQDEFVFQISKDEYLDILFEDLELPNLEKNQIAKITEWKTHRAGFQTAGIPSNISVIRSLQQSLARRTAMTAGKKRLLKELEDELTRIKNIEPAQQLEENRLKKEIEELRKKIENVPFIDTFDLRFKNYEKRPVPSSQAVMFCLMDVSGSMDQATKDIAKRFYVLLYLFLTRTYENVDVVFIRHHTQAKEVDEHEFFYSQETGGTIVSSALKLMDEIVKERYPVGQWNIYAAQASDGDNWADDSPRCRDLLVNKLLPNCQYYSYIEITRRSHQTLWHEYEKLTDEFPNFAMKNIRSVEDIFPVFRELFQKETA</sequence>
<name>Y986_VIBPA</name>
<reference key="1">
    <citation type="journal article" date="2003" name="Lancet">
        <title>Genome sequence of Vibrio parahaemolyticus: a pathogenic mechanism distinct from that of V. cholerae.</title>
        <authorList>
            <person name="Makino K."/>
            <person name="Oshima K."/>
            <person name="Kurokawa K."/>
            <person name="Yokoyama K."/>
            <person name="Uda T."/>
            <person name="Tagomori K."/>
            <person name="Iijima Y."/>
            <person name="Najima M."/>
            <person name="Nakano M."/>
            <person name="Yamashita A."/>
            <person name="Kubota Y."/>
            <person name="Kimura S."/>
            <person name="Yasunaga T."/>
            <person name="Honda T."/>
            <person name="Shinagawa H."/>
            <person name="Hattori M."/>
            <person name="Iida T."/>
        </authorList>
    </citation>
    <scope>NUCLEOTIDE SEQUENCE [LARGE SCALE GENOMIC DNA]</scope>
    <source>
        <strain>RIMD 2210633</strain>
    </source>
</reference>
<protein>
    <recommendedName>
        <fullName evidence="1">UPF0229 protein VP0986</fullName>
    </recommendedName>
</protein>
<evidence type="ECO:0000255" key="1">
    <source>
        <dbReference type="HAMAP-Rule" id="MF_01232"/>
    </source>
</evidence>
<evidence type="ECO:0000256" key="2">
    <source>
        <dbReference type="SAM" id="MobiDB-lite"/>
    </source>
</evidence>
<dbReference type="EMBL" id="BA000031">
    <property type="protein sequence ID" value="BAC59249.1"/>
    <property type="molecule type" value="Genomic_DNA"/>
</dbReference>
<dbReference type="RefSeq" id="NP_797365.1">
    <property type="nucleotide sequence ID" value="NC_004603.1"/>
</dbReference>
<dbReference type="RefSeq" id="WP_005481863.1">
    <property type="nucleotide sequence ID" value="NC_004603.1"/>
</dbReference>
<dbReference type="SMR" id="Q87R12"/>
<dbReference type="GeneID" id="1188490"/>
<dbReference type="KEGG" id="vpa:VP0986"/>
<dbReference type="PATRIC" id="fig|223926.6.peg.936"/>
<dbReference type="eggNOG" id="COG2718">
    <property type="taxonomic scope" value="Bacteria"/>
</dbReference>
<dbReference type="HOGENOM" id="CLU_049702_0_0_6"/>
<dbReference type="Proteomes" id="UP000002493">
    <property type="component" value="Chromosome 1"/>
</dbReference>
<dbReference type="HAMAP" id="MF_01232">
    <property type="entry name" value="UPF0229"/>
    <property type="match status" value="1"/>
</dbReference>
<dbReference type="InterPro" id="IPR006698">
    <property type="entry name" value="UPF0229"/>
</dbReference>
<dbReference type="NCBIfam" id="NF003707">
    <property type="entry name" value="PRK05325.1-2"/>
    <property type="match status" value="1"/>
</dbReference>
<dbReference type="NCBIfam" id="NF003708">
    <property type="entry name" value="PRK05325.1-3"/>
    <property type="match status" value="1"/>
</dbReference>
<dbReference type="PANTHER" id="PTHR30510">
    <property type="entry name" value="UPF0229 PROTEIN YEAH"/>
    <property type="match status" value="1"/>
</dbReference>
<dbReference type="PANTHER" id="PTHR30510:SF2">
    <property type="entry name" value="UPF0229 PROTEIN YEAH"/>
    <property type="match status" value="1"/>
</dbReference>
<dbReference type="Pfam" id="PF04285">
    <property type="entry name" value="DUF444"/>
    <property type="match status" value="1"/>
</dbReference>